<gene>
    <name evidence="1" type="primary">acpS</name>
    <name type="ordered locus">TT_C1022</name>
</gene>
<comment type="function">
    <text evidence="1">Transfers the 4'-phosphopantetheine moiety from coenzyme A to a Ser of acyl-carrier-protein.</text>
</comment>
<comment type="catalytic activity">
    <reaction evidence="1">
        <text>apo-[ACP] + CoA = holo-[ACP] + adenosine 3',5'-bisphosphate + H(+)</text>
        <dbReference type="Rhea" id="RHEA:12068"/>
        <dbReference type="Rhea" id="RHEA-COMP:9685"/>
        <dbReference type="Rhea" id="RHEA-COMP:9690"/>
        <dbReference type="ChEBI" id="CHEBI:15378"/>
        <dbReference type="ChEBI" id="CHEBI:29999"/>
        <dbReference type="ChEBI" id="CHEBI:57287"/>
        <dbReference type="ChEBI" id="CHEBI:58343"/>
        <dbReference type="ChEBI" id="CHEBI:64479"/>
        <dbReference type="EC" id="2.7.8.7"/>
    </reaction>
</comment>
<comment type="cofactor">
    <cofactor evidence="1">
        <name>Mg(2+)</name>
        <dbReference type="ChEBI" id="CHEBI:18420"/>
    </cofactor>
</comment>
<comment type="subcellular location">
    <subcellularLocation>
        <location evidence="1">Cytoplasm</location>
    </subcellularLocation>
</comment>
<comment type="similarity">
    <text evidence="1">Belongs to the P-Pant transferase superfamily. AcpS family.</text>
</comment>
<sequence length="125" mass="14022">MIVALGADLVEIARVERLLSRHGERALRRLFHEEEVAYALARQNPFPSLAARLAAKEAFQKCWPESLSWKEVWVGMEGKRPALRFAPRIEARMAEEGLFAHLSLSHERSHALAVVVLEARARGGG</sequence>
<reference key="1">
    <citation type="journal article" date="2004" name="Nat. Biotechnol.">
        <title>The genome sequence of the extreme thermophile Thermus thermophilus.</title>
        <authorList>
            <person name="Henne A."/>
            <person name="Brueggemann H."/>
            <person name="Raasch C."/>
            <person name="Wiezer A."/>
            <person name="Hartsch T."/>
            <person name="Liesegang H."/>
            <person name="Johann A."/>
            <person name="Lienard T."/>
            <person name="Gohl O."/>
            <person name="Martinez-Arias R."/>
            <person name="Jacobi C."/>
            <person name="Starkuviene V."/>
            <person name="Schlenczeck S."/>
            <person name="Dencker S."/>
            <person name="Huber R."/>
            <person name="Klenk H.-P."/>
            <person name="Kramer W."/>
            <person name="Merkl R."/>
            <person name="Gottschalk G."/>
            <person name="Fritz H.-J."/>
        </authorList>
    </citation>
    <scope>NUCLEOTIDE SEQUENCE [LARGE SCALE GENOMIC DNA]</scope>
    <source>
        <strain>ATCC BAA-163 / DSM 7039 / HB27</strain>
    </source>
</reference>
<feature type="chain" id="PRO_0000175721" description="Holo-[acyl-carrier-protein] synthase">
    <location>
        <begin position="1"/>
        <end position="125"/>
    </location>
</feature>
<feature type="binding site" evidence="1">
    <location>
        <position position="8"/>
    </location>
    <ligand>
        <name>Mg(2+)</name>
        <dbReference type="ChEBI" id="CHEBI:18420"/>
    </ligand>
</feature>
<feature type="binding site" evidence="1">
    <location>
        <position position="57"/>
    </location>
    <ligand>
        <name>Mg(2+)</name>
        <dbReference type="ChEBI" id="CHEBI:18420"/>
    </ligand>
</feature>
<dbReference type="EC" id="2.7.8.7" evidence="1"/>
<dbReference type="EMBL" id="AE017221">
    <property type="protein sequence ID" value="AAS81364.1"/>
    <property type="molecule type" value="Genomic_DNA"/>
</dbReference>
<dbReference type="RefSeq" id="WP_011173441.1">
    <property type="nucleotide sequence ID" value="NC_005835.1"/>
</dbReference>
<dbReference type="SMR" id="Q72IV9"/>
<dbReference type="GeneID" id="3169698"/>
<dbReference type="KEGG" id="tth:TT_C1022"/>
<dbReference type="eggNOG" id="COG0736">
    <property type="taxonomic scope" value="Bacteria"/>
</dbReference>
<dbReference type="HOGENOM" id="CLU_089696_0_2_0"/>
<dbReference type="OrthoDB" id="517356at2"/>
<dbReference type="Proteomes" id="UP000000592">
    <property type="component" value="Chromosome"/>
</dbReference>
<dbReference type="GO" id="GO:0005737">
    <property type="term" value="C:cytoplasm"/>
    <property type="evidence" value="ECO:0007669"/>
    <property type="project" value="UniProtKB-SubCell"/>
</dbReference>
<dbReference type="GO" id="GO:0008897">
    <property type="term" value="F:holo-[acyl-carrier-protein] synthase activity"/>
    <property type="evidence" value="ECO:0007669"/>
    <property type="project" value="UniProtKB-UniRule"/>
</dbReference>
<dbReference type="GO" id="GO:0000287">
    <property type="term" value="F:magnesium ion binding"/>
    <property type="evidence" value="ECO:0007669"/>
    <property type="project" value="UniProtKB-UniRule"/>
</dbReference>
<dbReference type="GO" id="GO:0006633">
    <property type="term" value="P:fatty acid biosynthetic process"/>
    <property type="evidence" value="ECO:0007669"/>
    <property type="project" value="UniProtKB-UniRule"/>
</dbReference>
<dbReference type="Gene3D" id="3.90.470.20">
    <property type="entry name" value="4'-phosphopantetheinyl transferase domain"/>
    <property type="match status" value="1"/>
</dbReference>
<dbReference type="HAMAP" id="MF_00101">
    <property type="entry name" value="AcpS"/>
    <property type="match status" value="1"/>
</dbReference>
<dbReference type="InterPro" id="IPR008278">
    <property type="entry name" value="4-PPantetheinyl_Trfase_dom"/>
</dbReference>
<dbReference type="InterPro" id="IPR037143">
    <property type="entry name" value="4-PPantetheinyl_Trfase_dom_sf"/>
</dbReference>
<dbReference type="InterPro" id="IPR002582">
    <property type="entry name" value="ACPS"/>
</dbReference>
<dbReference type="InterPro" id="IPR004568">
    <property type="entry name" value="Ppantetheine-prot_Trfase_dom"/>
</dbReference>
<dbReference type="NCBIfam" id="TIGR00556">
    <property type="entry name" value="pantethn_trn"/>
    <property type="match status" value="1"/>
</dbReference>
<dbReference type="NCBIfam" id="NF011256">
    <property type="entry name" value="PRK14662.1"/>
    <property type="match status" value="1"/>
</dbReference>
<dbReference type="Pfam" id="PF01648">
    <property type="entry name" value="ACPS"/>
    <property type="match status" value="1"/>
</dbReference>
<dbReference type="SUPFAM" id="SSF56214">
    <property type="entry name" value="4'-phosphopantetheinyl transferase"/>
    <property type="match status" value="1"/>
</dbReference>
<keyword id="KW-0963">Cytoplasm</keyword>
<keyword id="KW-0275">Fatty acid biosynthesis</keyword>
<keyword id="KW-0276">Fatty acid metabolism</keyword>
<keyword id="KW-0444">Lipid biosynthesis</keyword>
<keyword id="KW-0443">Lipid metabolism</keyword>
<keyword id="KW-0460">Magnesium</keyword>
<keyword id="KW-0479">Metal-binding</keyword>
<keyword id="KW-0808">Transferase</keyword>
<evidence type="ECO:0000255" key="1">
    <source>
        <dbReference type="HAMAP-Rule" id="MF_00101"/>
    </source>
</evidence>
<proteinExistence type="inferred from homology"/>
<protein>
    <recommendedName>
        <fullName evidence="1">Holo-[acyl-carrier-protein] synthase</fullName>
        <shortName evidence="1">Holo-ACP synthase</shortName>
        <ecNumber evidence="1">2.7.8.7</ecNumber>
    </recommendedName>
    <alternativeName>
        <fullName evidence="1">4'-phosphopantetheinyl transferase AcpS</fullName>
    </alternativeName>
</protein>
<organism>
    <name type="scientific">Thermus thermophilus (strain ATCC BAA-163 / DSM 7039 / HB27)</name>
    <dbReference type="NCBI Taxonomy" id="262724"/>
    <lineage>
        <taxon>Bacteria</taxon>
        <taxon>Thermotogati</taxon>
        <taxon>Deinococcota</taxon>
        <taxon>Deinococci</taxon>
        <taxon>Thermales</taxon>
        <taxon>Thermaceae</taxon>
        <taxon>Thermus</taxon>
    </lineage>
</organism>
<accession>Q72IV9</accession>
<name>ACPS_THET2</name>